<gene>
    <name evidence="6" type="primary">KIN14K</name>
    <name evidence="8" type="ordered locus">Os05g0521300</name>
    <name evidence="6" type="ordered locus">LOC_Os05g44560</name>
    <name evidence="9" type="ORF">OsJ_19246</name>
    <name evidence="7" type="ORF">P0483D07.17</name>
</gene>
<organism>
    <name type="scientific">Oryza sativa subsp. japonica</name>
    <name type="common">Rice</name>
    <dbReference type="NCBI Taxonomy" id="39947"/>
    <lineage>
        <taxon>Eukaryota</taxon>
        <taxon>Viridiplantae</taxon>
        <taxon>Streptophyta</taxon>
        <taxon>Embryophyta</taxon>
        <taxon>Tracheophyta</taxon>
        <taxon>Spermatophyta</taxon>
        <taxon>Magnoliopsida</taxon>
        <taxon>Liliopsida</taxon>
        <taxon>Poales</taxon>
        <taxon>Poaceae</taxon>
        <taxon>BOP clade</taxon>
        <taxon>Oryzoideae</taxon>
        <taxon>Oryzeae</taxon>
        <taxon>Oryzinae</taxon>
        <taxon>Oryza</taxon>
        <taxon>Oryza sativa</taxon>
    </lineage>
</organism>
<accession>B9FL70</accession>
<accession>A0A0P0WPM0</accession>
<accession>Q6F301</accession>
<protein>
    <recommendedName>
        <fullName evidence="6">Kinesin-like protein KIN-14K</fullName>
    </recommendedName>
</protein>
<sequence length="1016" mass="112733">MGSVDGDFEGLQAADRRAEVIEWLNALLPEYCLPLDSSDDELRELLSDGTVLCHIVNALIPGVLEESWGAYASSDQHAGHVKKFLAVVADMGLPGFSVKDLEEGSMSGVVDCLLVLRESVSSGLRDGTSKAPLRKKWRVPETGEPLVPGVAQGKTSPGEDKRNGLPDPKSQQKTPIFNGRKLREIFQLKRGSYADLPAAKISEMMHSNSLDNAPTQSLLSVVNGILDESIERKKGEIPHRVVYLLRKVVQEIERRLCIQAEHIRSQNVIIKTREDKYHSKIKALEILVNGTNEENQMAINRLQIIKEEKSKIEEKRKLGEQDVARLMKEKEISENTIASLKKEMEVMTSMHEQQLQKIELTAKQMEEHLTTKIKEVESLLVQSNKKIEEVEAASLLKSQLWNKKEGIFQKYMNSQQLYVKGLRISSWSIKNEMHALEMELRDEMSNFGSGLKCLVDAAENYHKVLAENQKLFNEVQELKGNIRVYCRVRPFLPGQDKKSTTVDYIGENGELLISNPFKQGKDGHRMFKFNKVFSPFSSQAEVFSDIQPLIRSVLDGFNVCIFAYGQTGSGKTYTMSGPSTSKQDWGVNYRALNDLFDISLSRRNAFSYEVGVQMVEIYNEQVRDLLSNDIAQKRLGIWSTSQPNGLVVPDASLHPVKSTSDVLDLMEIGQANRAVGSTALNERSSRSHSILTVHVRGLDVKNGSTSRGCLHLIDLAGSERVERSEATGDRLKEAQHINKSLSALGDVIFALAQKNAHVPYRNSKLTQVLQSSLGGQAKTLMFVQINPDVESYSETISTLKFAERVSGVELGAARSNKEGKDIKELLEQVASLKDTIVRKDTEIEQLQLMKDKVKSPSFAVDINGASMPKNSNSDLRSVLSITTNQQSQLSDPQSYAEVNRDGGPTSYTDITPTCLDEADFEDNASEDGFSGGTDYSVGCAAGASVFPNSCSDRTADTSIRRISSRIARFSLTKNGQPATSRPKPKDTAPKTPNQTRVQSSQLIGGSSLRASKRWQK</sequence>
<feature type="chain" id="PRO_0000438636" description="Kinesin-like protein KIN-14K">
    <location>
        <begin position="1"/>
        <end position="1016"/>
    </location>
</feature>
<feature type="domain" description="Calponin-homology (CH)" evidence="2">
    <location>
        <begin position="14"/>
        <end position="121"/>
    </location>
</feature>
<feature type="domain" description="Kinesin motor" evidence="3">
    <location>
        <begin position="481"/>
        <end position="808"/>
    </location>
</feature>
<feature type="region of interest" description="Disordered" evidence="4">
    <location>
        <begin position="123"/>
        <end position="176"/>
    </location>
</feature>
<feature type="region of interest" description="Disordered" evidence="4">
    <location>
        <begin position="884"/>
        <end position="912"/>
    </location>
</feature>
<feature type="region of interest" description="Disordered" evidence="4">
    <location>
        <begin position="971"/>
        <end position="1016"/>
    </location>
</feature>
<feature type="coiled-coil region" evidence="1">
    <location>
        <begin position="288"/>
        <end position="354"/>
    </location>
</feature>
<feature type="coiled-coil region" evidence="1">
    <location>
        <begin position="820"/>
        <end position="852"/>
    </location>
</feature>
<feature type="compositionally biased region" description="Polar residues" evidence="4">
    <location>
        <begin position="884"/>
        <end position="893"/>
    </location>
</feature>
<feature type="compositionally biased region" description="Polar residues" evidence="4">
    <location>
        <begin position="990"/>
        <end position="1004"/>
    </location>
</feature>
<feature type="binding site" evidence="3">
    <location>
        <begin position="565"/>
        <end position="572"/>
    </location>
    <ligand>
        <name>ATP</name>
        <dbReference type="ChEBI" id="CHEBI:30616"/>
    </ligand>
</feature>
<comment type="similarity">
    <text evidence="5">Belongs to the TRAFAC class myosin-kinesin ATPase superfamily. Kinesin family. KIN-14 subfamily.</text>
</comment>
<comment type="sequence caution" evidence="6">
    <conflict type="erroneous gene model prediction">
        <sequence resource="EMBL-CDS" id="AAT69670"/>
    </conflict>
</comment>
<comment type="sequence caution" evidence="6">
    <conflict type="miscellaneous discrepancy">
        <sequence resource="EMBL" id="AK065361"/>
    </conflict>
    <text>Chimeric cDNA. Its N-terminal part is derived from another gene (LOC_Os05g44570).</text>
</comment>
<comment type="sequence caution" evidence="6">
    <conflict type="erroneous gene model prediction">
        <sequence resource="EMBL-CDS" id="BAS94940"/>
    </conflict>
</comment>
<reference key="1">
    <citation type="journal article" date="2005" name="Mol. Genet. Genomics">
        <title>A fine physical map of the rice chromosome 5.</title>
        <authorList>
            <person name="Cheng C.-H."/>
            <person name="Chung M.C."/>
            <person name="Liu S.-M."/>
            <person name="Chen S.-K."/>
            <person name="Kao F.Y."/>
            <person name="Lin S.-J."/>
            <person name="Hsiao S.-H."/>
            <person name="Tseng I.C."/>
            <person name="Hsing Y.-I.C."/>
            <person name="Wu H.-P."/>
            <person name="Chen C.-S."/>
            <person name="Shaw J.-F."/>
            <person name="Wu J."/>
            <person name="Matsumoto T."/>
            <person name="Sasaki T."/>
            <person name="Chen H.-C."/>
            <person name="Chow T.-Y."/>
        </authorList>
    </citation>
    <scope>NUCLEOTIDE SEQUENCE [LARGE SCALE GENOMIC DNA]</scope>
    <source>
        <strain>cv. Nipponbare</strain>
    </source>
</reference>
<reference key="2">
    <citation type="journal article" date="2005" name="Nature">
        <title>The map-based sequence of the rice genome.</title>
        <authorList>
            <consortium name="International rice genome sequencing project (IRGSP)"/>
        </authorList>
    </citation>
    <scope>NUCLEOTIDE SEQUENCE [LARGE SCALE GENOMIC DNA]</scope>
    <source>
        <strain>cv. Nipponbare</strain>
    </source>
</reference>
<reference key="3">
    <citation type="journal article" date="2013" name="Rice">
        <title>Improvement of the Oryza sativa Nipponbare reference genome using next generation sequence and optical map data.</title>
        <authorList>
            <person name="Kawahara Y."/>
            <person name="de la Bastide M."/>
            <person name="Hamilton J.P."/>
            <person name="Kanamori H."/>
            <person name="McCombie W.R."/>
            <person name="Ouyang S."/>
            <person name="Schwartz D.C."/>
            <person name="Tanaka T."/>
            <person name="Wu J."/>
            <person name="Zhou S."/>
            <person name="Childs K.L."/>
            <person name="Davidson R.M."/>
            <person name="Lin H."/>
            <person name="Quesada-Ocampo L."/>
            <person name="Vaillancourt B."/>
            <person name="Sakai H."/>
            <person name="Lee S.S."/>
            <person name="Kim J."/>
            <person name="Numa H."/>
            <person name="Itoh T."/>
            <person name="Buell C.R."/>
            <person name="Matsumoto T."/>
        </authorList>
    </citation>
    <scope>GENOME REANNOTATION</scope>
    <source>
        <strain>cv. Nipponbare</strain>
    </source>
</reference>
<reference key="4">
    <citation type="journal article" date="2005" name="PLoS Biol.">
        <title>The genomes of Oryza sativa: a history of duplications.</title>
        <authorList>
            <person name="Yu J."/>
            <person name="Wang J."/>
            <person name="Lin W."/>
            <person name="Li S."/>
            <person name="Li H."/>
            <person name="Zhou J."/>
            <person name="Ni P."/>
            <person name="Dong W."/>
            <person name="Hu S."/>
            <person name="Zeng C."/>
            <person name="Zhang J."/>
            <person name="Zhang Y."/>
            <person name="Li R."/>
            <person name="Xu Z."/>
            <person name="Li S."/>
            <person name="Li X."/>
            <person name="Zheng H."/>
            <person name="Cong L."/>
            <person name="Lin L."/>
            <person name="Yin J."/>
            <person name="Geng J."/>
            <person name="Li G."/>
            <person name="Shi J."/>
            <person name="Liu J."/>
            <person name="Lv H."/>
            <person name="Li J."/>
            <person name="Wang J."/>
            <person name="Deng Y."/>
            <person name="Ran L."/>
            <person name="Shi X."/>
            <person name="Wang X."/>
            <person name="Wu Q."/>
            <person name="Li C."/>
            <person name="Ren X."/>
            <person name="Wang J."/>
            <person name="Wang X."/>
            <person name="Li D."/>
            <person name="Liu D."/>
            <person name="Zhang X."/>
            <person name="Ji Z."/>
            <person name="Zhao W."/>
            <person name="Sun Y."/>
            <person name="Zhang Z."/>
            <person name="Bao J."/>
            <person name="Han Y."/>
            <person name="Dong L."/>
            <person name="Ji J."/>
            <person name="Chen P."/>
            <person name="Wu S."/>
            <person name="Liu J."/>
            <person name="Xiao Y."/>
            <person name="Bu D."/>
            <person name="Tan J."/>
            <person name="Yang L."/>
            <person name="Ye C."/>
            <person name="Zhang J."/>
            <person name="Xu J."/>
            <person name="Zhou Y."/>
            <person name="Yu Y."/>
            <person name="Zhang B."/>
            <person name="Zhuang S."/>
            <person name="Wei H."/>
            <person name="Liu B."/>
            <person name="Lei M."/>
            <person name="Yu H."/>
            <person name="Li Y."/>
            <person name="Xu H."/>
            <person name="Wei S."/>
            <person name="He X."/>
            <person name="Fang L."/>
            <person name="Zhang Z."/>
            <person name="Zhang Y."/>
            <person name="Huang X."/>
            <person name="Su Z."/>
            <person name="Tong W."/>
            <person name="Li J."/>
            <person name="Tong Z."/>
            <person name="Li S."/>
            <person name="Ye J."/>
            <person name="Wang L."/>
            <person name="Fang L."/>
            <person name="Lei T."/>
            <person name="Chen C.-S."/>
            <person name="Chen H.-C."/>
            <person name="Xu Z."/>
            <person name="Li H."/>
            <person name="Huang H."/>
            <person name="Zhang F."/>
            <person name="Xu H."/>
            <person name="Li N."/>
            <person name="Zhao C."/>
            <person name="Li S."/>
            <person name="Dong L."/>
            <person name="Huang Y."/>
            <person name="Li L."/>
            <person name="Xi Y."/>
            <person name="Qi Q."/>
            <person name="Li W."/>
            <person name="Zhang B."/>
            <person name="Hu W."/>
            <person name="Zhang Y."/>
            <person name="Tian X."/>
            <person name="Jiao Y."/>
            <person name="Liang X."/>
            <person name="Jin J."/>
            <person name="Gao L."/>
            <person name="Zheng W."/>
            <person name="Hao B."/>
            <person name="Liu S.-M."/>
            <person name="Wang W."/>
            <person name="Yuan L."/>
            <person name="Cao M."/>
            <person name="McDermott J."/>
            <person name="Samudrala R."/>
            <person name="Wang J."/>
            <person name="Wong G.K.-S."/>
            <person name="Yang H."/>
        </authorList>
    </citation>
    <scope>NUCLEOTIDE SEQUENCE [LARGE SCALE GENOMIC DNA]</scope>
    <source>
        <strain>cv. Nipponbare</strain>
    </source>
</reference>
<reference key="5">
    <citation type="journal article" date="2003" name="Science">
        <title>Collection, mapping, and annotation of over 28,000 cDNA clones from japonica rice.</title>
        <authorList>
            <consortium name="The rice full-length cDNA consortium"/>
        </authorList>
    </citation>
    <scope>NUCLEOTIDE SEQUENCE [LARGE SCALE MRNA] OF 15-1016</scope>
    <source>
        <strain>cv. Nipponbare</strain>
    </source>
</reference>
<reference key="6">
    <citation type="journal article" date="2009" name="Ann. Bot.">
        <title>Evaluating the microtubule cytoskeleton and its interacting proteins in monocots by mining the rice genome.</title>
        <authorList>
            <person name="Guo L."/>
            <person name="Ho C.M."/>
            <person name="Kong Z."/>
            <person name="Lee Y.R."/>
            <person name="Qian Q."/>
            <person name="Liu B."/>
        </authorList>
    </citation>
    <scope>GENE FAMILY</scope>
    <scope>NOMENCLATURE</scope>
</reference>
<keyword id="KW-0067">ATP-binding</keyword>
<keyword id="KW-0175">Coiled coil</keyword>
<keyword id="KW-0493">Microtubule</keyword>
<keyword id="KW-0505">Motor protein</keyword>
<keyword id="KW-0547">Nucleotide-binding</keyword>
<keyword id="KW-1185">Reference proteome</keyword>
<dbReference type="EMBL" id="AC130611">
    <property type="protein sequence ID" value="AAT69670.1"/>
    <property type="status" value="ALT_SEQ"/>
    <property type="molecule type" value="Genomic_DNA"/>
</dbReference>
<dbReference type="EMBL" id="AP014961">
    <property type="protein sequence ID" value="BAS94940.1"/>
    <property type="status" value="ALT_SEQ"/>
    <property type="molecule type" value="Genomic_DNA"/>
</dbReference>
<dbReference type="EMBL" id="CM000142">
    <property type="protein sequence ID" value="EEE64402.1"/>
    <property type="molecule type" value="Genomic_DNA"/>
</dbReference>
<dbReference type="EMBL" id="AK065361">
    <property type="status" value="NOT_ANNOTATED_CDS"/>
    <property type="molecule type" value="mRNA"/>
</dbReference>
<dbReference type="RefSeq" id="XP_015639474.1">
    <property type="nucleotide sequence ID" value="XM_015783988.1"/>
</dbReference>
<dbReference type="SMR" id="B9FL70"/>
<dbReference type="FunCoup" id="B9FL70">
    <property type="interactions" value="50"/>
</dbReference>
<dbReference type="STRING" id="39947.B9FL70"/>
<dbReference type="PaxDb" id="39947-B9FL70"/>
<dbReference type="eggNOG" id="KOG0239">
    <property type="taxonomic scope" value="Eukaryota"/>
</dbReference>
<dbReference type="HOGENOM" id="CLU_001485_1_0_1"/>
<dbReference type="InParanoid" id="B9FL70"/>
<dbReference type="OrthoDB" id="3176171at2759"/>
<dbReference type="Proteomes" id="UP000000763">
    <property type="component" value="Chromosome 5"/>
</dbReference>
<dbReference type="Proteomes" id="UP000007752">
    <property type="component" value="Chromosome 5"/>
</dbReference>
<dbReference type="Proteomes" id="UP000059680">
    <property type="component" value="Chromosome 5"/>
</dbReference>
<dbReference type="GO" id="GO:0005874">
    <property type="term" value="C:microtubule"/>
    <property type="evidence" value="ECO:0007669"/>
    <property type="project" value="UniProtKB-KW"/>
</dbReference>
<dbReference type="GO" id="GO:0015630">
    <property type="term" value="C:microtubule cytoskeleton"/>
    <property type="evidence" value="ECO:0000318"/>
    <property type="project" value="GO_Central"/>
</dbReference>
<dbReference type="GO" id="GO:0005524">
    <property type="term" value="F:ATP binding"/>
    <property type="evidence" value="ECO:0007669"/>
    <property type="project" value="UniProtKB-KW"/>
</dbReference>
<dbReference type="GO" id="GO:0008017">
    <property type="term" value="F:microtubule binding"/>
    <property type="evidence" value="ECO:0000318"/>
    <property type="project" value="GO_Central"/>
</dbReference>
<dbReference type="GO" id="GO:0003777">
    <property type="term" value="F:microtubule motor activity"/>
    <property type="evidence" value="ECO:0007669"/>
    <property type="project" value="InterPro"/>
</dbReference>
<dbReference type="GO" id="GO:0007018">
    <property type="term" value="P:microtubule-based movement"/>
    <property type="evidence" value="ECO:0007669"/>
    <property type="project" value="InterPro"/>
</dbReference>
<dbReference type="GO" id="GO:0007017">
    <property type="term" value="P:microtubule-based process"/>
    <property type="evidence" value="ECO:0000318"/>
    <property type="project" value="GO_Central"/>
</dbReference>
<dbReference type="FunFam" id="3.40.850.10:FF:000178">
    <property type="entry name" value="Kinesin-related protein3"/>
    <property type="match status" value="1"/>
</dbReference>
<dbReference type="FunFam" id="1.10.418.10:FF:000065">
    <property type="entry name" value="p-loop nucleoside triphosphate hydrolase superfamily protein with CH (Calponin Homology) domain"/>
    <property type="match status" value="1"/>
</dbReference>
<dbReference type="FunFam" id="3.40.850.10:FF:000111">
    <property type="entry name" value="p-loop nucleoside triphosphate hydrolase superfamily protein with CH (Calponin Homology) domain"/>
    <property type="match status" value="1"/>
</dbReference>
<dbReference type="Gene3D" id="1.10.418.10">
    <property type="entry name" value="Calponin-like domain"/>
    <property type="match status" value="1"/>
</dbReference>
<dbReference type="Gene3D" id="3.40.850.10">
    <property type="entry name" value="Kinesin motor domain"/>
    <property type="match status" value="1"/>
</dbReference>
<dbReference type="InterPro" id="IPR001715">
    <property type="entry name" value="CH_dom"/>
</dbReference>
<dbReference type="InterPro" id="IPR036872">
    <property type="entry name" value="CH_dom_sf"/>
</dbReference>
<dbReference type="InterPro" id="IPR027640">
    <property type="entry name" value="Kinesin-like_fam"/>
</dbReference>
<dbReference type="InterPro" id="IPR001752">
    <property type="entry name" value="Kinesin_motor_dom"/>
</dbReference>
<dbReference type="InterPro" id="IPR036961">
    <property type="entry name" value="Kinesin_motor_dom_sf"/>
</dbReference>
<dbReference type="InterPro" id="IPR027417">
    <property type="entry name" value="P-loop_NTPase"/>
</dbReference>
<dbReference type="PANTHER" id="PTHR47972:SF14">
    <property type="entry name" value="KINESIN-LIKE PROTEIN KIN-14J"/>
    <property type="match status" value="1"/>
</dbReference>
<dbReference type="PANTHER" id="PTHR47972">
    <property type="entry name" value="KINESIN-LIKE PROTEIN KLP-3"/>
    <property type="match status" value="1"/>
</dbReference>
<dbReference type="Pfam" id="PF00307">
    <property type="entry name" value="CH"/>
    <property type="match status" value="1"/>
</dbReference>
<dbReference type="Pfam" id="PF00225">
    <property type="entry name" value="Kinesin"/>
    <property type="match status" value="1"/>
</dbReference>
<dbReference type="PRINTS" id="PR00380">
    <property type="entry name" value="KINESINHEAVY"/>
</dbReference>
<dbReference type="SMART" id="SM00129">
    <property type="entry name" value="KISc"/>
    <property type="match status" value="1"/>
</dbReference>
<dbReference type="SUPFAM" id="SSF47576">
    <property type="entry name" value="Calponin-homology domain, CH-domain"/>
    <property type="match status" value="1"/>
</dbReference>
<dbReference type="SUPFAM" id="SSF52540">
    <property type="entry name" value="P-loop containing nucleoside triphosphate hydrolases"/>
    <property type="match status" value="1"/>
</dbReference>
<dbReference type="PROSITE" id="PS50021">
    <property type="entry name" value="CH"/>
    <property type="match status" value="1"/>
</dbReference>
<dbReference type="PROSITE" id="PS50067">
    <property type="entry name" value="KINESIN_MOTOR_2"/>
    <property type="match status" value="1"/>
</dbReference>
<evidence type="ECO:0000255" key="1"/>
<evidence type="ECO:0000255" key="2">
    <source>
        <dbReference type="PROSITE-ProRule" id="PRU00044"/>
    </source>
</evidence>
<evidence type="ECO:0000255" key="3">
    <source>
        <dbReference type="PROSITE-ProRule" id="PRU00283"/>
    </source>
</evidence>
<evidence type="ECO:0000256" key="4">
    <source>
        <dbReference type="SAM" id="MobiDB-lite"/>
    </source>
</evidence>
<evidence type="ECO:0000303" key="5">
    <source>
    </source>
</evidence>
<evidence type="ECO:0000305" key="6"/>
<evidence type="ECO:0000312" key="7">
    <source>
        <dbReference type="EMBL" id="AAT69670.1"/>
    </source>
</evidence>
<evidence type="ECO:0000312" key="8">
    <source>
        <dbReference type="EMBL" id="BAS94940.1"/>
    </source>
</evidence>
<evidence type="ECO:0000312" key="9">
    <source>
        <dbReference type="EMBL" id="EEE64402.1"/>
    </source>
</evidence>
<proteinExistence type="evidence at transcript level"/>
<name>KN14K_ORYSJ</name>